<name>PHEA_BACSU</name>
<accession>P21203</accession>
<dbReference type="EC" id="4.2.1.51"/>
<dbReference type="EMBL" id="M24537">
    <property type="protein sequence ID" value="AAA22507.1"/>
    <property type="molecule type" value="Genomic_DNA"/>
</dbReference>
<dbReference type="EMBL" id="AL009126">
    <property type="protein sequence ID" value="CAB14750.1"/>
    <property type="molecule type" value="Genomic_DNA"/>
</dbReference>
<dbReference type="EMBL" id="M98822">
    <property type="status" value="NOT_ANNOTATED_CDS"/>
    <property type="molecule type" value="Genomic_DNA"/>
</dbReference>
<dbReference type="PIR" id="C32804">
    <property type="entry name" value="C32804"/>
</dbReference>
<dbReference type="RefSeq" id="NP_390668.1">
    <property type="nucleotide sequence ID" value="NC_000964.3"/>
</dbReference>
<dbReference type="RefSeq" id="WP_004398512.1">
    <property type="nucleotide sequence ID" value="NZ_OZ025638.1"/>
</dbReference>
<dbReference type="SMR" id="P21203"/>
<dbReference type="FunCoup" id="P21203">
    <property type="interactions" value="483"/>
</dbReference>
<dbReference type="STRING" id="224308.BSU27900"/>
<dbReference type="PaxDb" id="224308-BSU27900"/>
<dbReference type="EnsemblBacteria" id="CAB14750">
    <property type="protein sequence ID" value="CAB14750"/>
    <property type="gene ID" value="BSU_27900"/>
</dbReference>
<dbReference type="GeneID" id="937513"/>
<dbReference type="KEGG" id="bsu:BSU27900"/>
<dbReference type="PATRIC" id="fig|224308.179.peg.3031"/>
<dbReference type="eggNOG" id="COG0077">
    <property type="taxonomic scope" value="Bacteria"/>
</dbReference>
<dbReference type="InParanoid" id="P21203"/>
<dbReference type="OrthoDB" id="9802281at2"/>
<dbReference type="PhylomeDB" id="P21203"/>
<dbReference type="BioCyc" id="BSUB:BSU27900-MONOMER"/>
<dbReference type="UniPathway" id="UPA00121">
    <property type="reaction ID" value="UER00345"/>
</dbReference>
<dbReference type="Proteomes" id="UP000001570">
    <property type="component" value="Chromosome"/>
</dbReference>
<dbReference type="GO" id="GO:0005737">
    <property type="term" value="C:cytoplasm"/>
    <property type="evidence" value="ECO:0000318"/>
    <property type="project" value="GO_Central"/>
</dbReference>
<dbReference type="GO" id="GO:0004664">
    <property type="term" value="F:prephenate dehydratase activity"/>
    <property type="evidence" value="ECO:0000318"/>
    <property type="project" value="GO_Central"/>
</dbReference>
<dbReference type="GO" id="GO:0009094">
    <property type="term" value="P:L-phenylalanine biosynthetic process"/>
    <property type="evidence" value="ECO:0000318"/>
    <property type="project" value="GO_Central"/>
</dbReference>
<dbReference type="CDD" id="cd04905">
    <property type="entry name" value="ACT_CM-PDT"/>
    <property type="match status" value="1"/>
</dbReference>
<dbReference type="CDD" id="cd13633">
    <property type="entry name" value="PBP2_Sa-PDT_like"/>
    <property type="match status" value="1"/>
</dbReference>
<dbReference type="FunFam" id="3.30.70.260:FF:000012">
    <property type="entry name" value="Prephenate dehydratase"/>
    <property type="match status" value="1"/>
</dbReference>
<dbReference type="FunFam" id="3.40.190.10:FF:000064">
    <property type="entry name" value="Prephenate dehydratase"/>
    <property type="match status" value="1"/>
</dbReference>
<dbReference type="Gene3D" id="3.30.70.260">
    <property type="match status" value="1"/>
</dbReference>
<dbReference type="Gene3D" id="3.40.190.10">
    <property type="entry name" value="Periplasmic binding protein-like II"/>
    <property type="match status" value="2"/>
</dbReference>
<dbReference type="InterPro" id="IPR045865">
    <property type="entry name" value="ACT-like_dom_sf"/>
</dbReference>
<dbReference type="InterPro" id="IPR002912">
    <property type="entry name" value="ACT_dom"/>
</dbReference>
<dbReference type="InterPro" id="IPR008242">
    <property type="entry name" value="Chor_mutase/pphenate_deHydtase"/>
</dbReference>
<dbReference type="InterPro" id="IPR001086">
    <property type="entry name" value="Preph_deHydtase"/>
</dbReference>
<dbReference type="InterPro" id="IPR018528">
    <property type="entry name" value="Preph_deHydtase_CS"/>
</dbReference>
<dbReference type="NCBIfam" id="NF008865">
    <property type="entry name" value="PRK11898.1"/>
    <property type="match status" value="1"/>
</dbReference>
<dbReference type="PANTHER" id="PTHR21022">
    <property type="entry name" value="PREPHENATE DEHYDRATASE P PROTEIN"/>
    <property type="match status" value="1"/>
</dbReference>
<dbReference type="PANTHER" id="PTHR21022:SF19">
    <property type="entry name" value="PREPHENATE DEHYDRATASE-RELATED"/>
    <property type="match status" value="1"/>
</dbReference>
<dbReference type="Pfam" id="PF01842">
    <property type="entry name" value="ACT"/>
    <property type="match status" value="1"/>
</dbReference>
<dbReference type="Pfam" id="PF00800">
    <property type="entry name" value="PDT"/>
    <property type="match status" value="1"/>
</dbReference>
<dbReference type="PIRSF" id="PIRSF001500">
    <property type="entry name" value="Chor_mut_pdt_Ppr"/>
    <property type="match status" value="1"/>
</dbReference>
<dbReference type="SUPFAM" id="SSF55021">
    <property type="entry name" value="ACT-like"/>
    <property type="match status" value="1"/>
</dbReference>
<dbReference type="SUPFAM" id="SSF53850">
    <property type="entry name" value="Periplasmic binding protein-like II"/>
    <property type="match status" value="1"/>
</dbReference>
<dbReference type="PROSITE" id="PS51671">
    <property type="entry name" value="ACT"/>
    <property type="match status" value="1"/>
</dbReference>
<dbReference type="PROSITE" id="PS00857">
    <property type="entry name" value="PREPHENATE_DEHYDR_1"/>
    <property type="match status" value="1"/>
</dbReference>
<dbReference type="PROSITE" id="PS00858">
    <property type="entry name" value="PREPHENATE_DEHYDR_2"/>
    <property type="match status" value="1"/>
</dbReference>
<dbReference type="PROSITE" id="PS51171">
    <property type="entry name" value="PREPHENATE_DEHYDR_3"/>
    <property type="match status" value="1"/>
</dbReference>
<sequence>MKVGYLGPAATFTHLAVSSCFQNGAEHVAYRTIPECIDAAVAGEVDFAFVPLENALEGSVNLTIDYLIHEQPLPIVGEMTLPIHQHLLVHPSRENAWKELDKIYSHSHAIAQCHKFLHRHFPSVPYEYANSTGAAAKFVSDHPELNIGVIANDMAASTYELKIVKRDIQDYRDNHTRFVILSPDENISFEVNSKLSSRPKTTLMVMLPQDDQSGALHRVLSAFSWRNLNLSKIESRPTKTGLGHYFFIIDIEKAFDDVLIPGAMQELEALGCKVRLLGAYQSYQL</sequence>
<gene>
    <name type="primary">pheA</name>
    <name type="ordered locus">BSU27900</name>
</gene>
<evidence type="ECO:0000250" key="1"/>
<evidence type="ECO:0000255" key="2">
    <source>
        <dbReference type="PROSITE-ProRule" id="PRU00517"/>
    </source>
</evidence>
<evidence type="ECO:0000255" key="3">
    <source>
        <dbReference type="PROSITE-ProRule" id="PRU01007"/>
    </source>
</evidence>
<protein>
    <recommendedName>
        <fullName>Prephenate dehydratase</fullName>
        <shortName>PDT</shortName>
        <ecNumber>4.2.1.51</ecNumber>
    </recommendedName>
</protein>
<reference key="1">
    <citation type="journal article" date="1989" name="J. Bacteriol.">
        <title>The Bacillus subtilis spo0B stage 0 sporulation operon encodes an essential GTP-binding protein.</title>
        <authorList>
            <person name="Trach K."/>
            <person name="Hoch J.A."/>
        </authorList>
    </citation>
    <scope>NUCLEOTIDE SEQUENCE [GENOMIC DNA]</scope>
</reference>
<reference key="2">
    <citation type="journal article" date="1997" name="Nature">
        <title>The complete genome sequence of the Gram-positive bacterium Bacillus subtilis.</title>
        <authorList>
            <person name="Kunst F."/>
            <person name="Ogasawara N."/>
            <person name="Moszer I."/>
            <person name="Albertini A.M."/>
            <person name="Alloni G."/>
            <person name="Azevedo V."/>
            <person name="Bertero M.G."/>
            <person name="Bessieres P."/>
            <person name="Bolotin A."/>
            <person name="Borchert S."/>
            <person name="Borriss R."/>
            <person name="Boursier L."/>
            <person name="Brans A."/>
            <person name="Braun M."/>
            <person name="Brignell S.C."/>
            <person name="Bron S."/>
            <person name="Brouillet S."/>
            <person name="Bruschi C.V."/>
            <person name="Caldwell B."/>
            <person name="Capuano V."/>
            <person name="Carter N.M."/>
            <person name="Choi S.-K."/>
            <person name="Codani J.-J."/>
            <person name="Connerton I.F."/>
            <person name="Cummings N.J."/>
            <person name="Daniel R.A."/>
            <person name="Denizot F."/>
            <person name="Devine K.M."/>
            <person name="Duesterhoeft A."/>
            <person name="Ehrlich S.D."/>
            <person name="Emmerson P.T."/>
            <person name="Entian K.-D."/>
            <person name="Errington J."/>
            <person name="Fabret C."/>
            <person name="Ferrari E."/>
            <person name="Foulger D."/>
            <person name="Fritz C."/>
            <person name="Fujita M."/>
            <person name="Fujita Y."/>
            <person name="Fuma S."/>
            <person name="Galizzi A."/>
            <person name="Galleron N."/>
            <person name="Ghim S.-Y."/>
            <person name="Glaser P."/>
            <person name="Goffeau A."/>
            <person name="Golightly E.J."/>
            <person name="Grandi G."/>
            <person name="Guiseppi G."/>
            <person name="Guy B.J."/>
            <person name="Haga K."/>
            <person name="Haiech J."/>
            <person name="Harwood C.R."/>
            <person name="Henaut A."/>
            <person name="Hilbert H."/>
            <person name="Holsappel S."/>
            <person name="Hosono S."/>
            <person name="Hullo M.-F."/>
            <person name="Itaya M."/>
            <person name="Jones L.-M."/>
            <person name="Joris B."/>
            <person name="Karamata D."/>
            <person name="Kasahara Y."/>
            <person name="Klaerr-Blanchard M."/>
            <person name="Klein C."/>
            <person name="Kobayashi Y."/>
            <person name="Koetter P."/>
            <person name="Koningstein G."/>
            <person name="Krogh S."/>
            <person name="Kumano M."/>
            <person name="Kurita K."/>
            <person name="Lapidus A."/>
            <person name="Lardinois S."/>
            <person name="Lauber J."/>
            <person name="Lazarevic V."/>
            <person name="Lee S.-M."/>
            <person name="Levine A."/>
            <person name="Liu H."/>
            <person name="Masuda S."/>
            <person name="Mauel C."/>
            <person name="Medigue C."/>
            <person name="Medina N."/>
            <person name="Mellado R.P."/>
            <person name="Mizuno M."/>
            <person name="Moestl D."/>
            <person name="Nakai S."/>
            <person name="Noback M."/>
            <person name="Noone D."/>
            <person name="O'Reilly M."/>
            <person name="Ogawa K."/>
            <person name="Ogiwara A."/>
            <person name="Oudega B."/>
            <person name="Park S.-H."/>
            <person name="Parro V."/>
            <person name="Pohl T.M."/>
            <person name="Portetelle D."/>
            <person name="Porwollik S."/>
            <person name="Prescott A.M."/>
            <person name="Presecan E."/>
            <person name="Pujic P."/>
            <person name="Purnelle B."/>
            <person name="Rapoport G."/>
            <person name="Rey M."/>
            <person name="Reynolds S."/>
            <person name="Rieger M."/>
            <person name="Rivolta C."/>
            <person name="Rocha E."/>
            <person name="Roche B."/>
            <person name="Rose M."/>
            <person name="Sadaie Y."/>
            <person name="Sato T."/>
            <person name="Scanlan E."/>
            <person name="Schleich S."/>
            <person name="Schroeter R."/>
            <person name="Scoffone F."/>
            <person name="Sekiguchi J."/>
            <person name="Sekowska A."/>
            <person name="Seror S.J."/>
            <person name="Serror P."/>
            <person name="Shin B.-S."/>
            <person name="Soldo B."/>
            <person name="Sorokin A."/>
            <person name="Tacconi E."/>
            <person name="Takagi T."/>
            <person name="Takahashi H."/>
            <person name="Takemaru K."/>
            <person name="Takeuchi M."/>
            <person name="Tamakoshi A."/>
            <person name="Tanaka T."/>
            <person name="Terpstra P."/>
            <person name="Tognoni A."/>
            <person name="Tosato V."/>
            <person name="Uchiyama S."/>
            <person name="Vandenbol M."/>
            <person name="Vannier F."/>
            <person name="Vassarotti A."/>
            <person name="Viari A."/>
            <person name="Wambutt R."/>
            <person name="Wedler E."/>
            <person name="Wedler H."/>
            <person name="Weitzenegger T."/>
            <person name="Winters P."/>
            <person name="Wipat A."/>
            <person name="Yamamoto H."/>
            <person name="Yamane K."/>
            <person name="Yasumoto K."/>
            <person name="Yata K."/>
            <person name="Yoshida K."/>
            <person name="Yoshikawa H.-F."/>
            <person name="Zumstein E."/>
            <person name="Yoshikawa H."/>
            <person name="Danchin A."/>
        </authorList>
    </citation>
    <scope>NUCLEOTIDE SEQUENCE [LARGE SCALE GENOMIC DNA]</scope>
    <source>
        <strain>168</strain>
    </source>
</reference>
<reference key="3">
    <citation type="journal article" date="1993" name="J. Bacteriol.">
        <title>Cloning, nucleotide sequence, and regulation of the Bacillus subtilis nadB gene and a nifS-like gene, both of which are essential for NAD biosynthesis.</title>
        <authorList>
            <person name="Sun D."/>
            <person name="Setlow P.L."/>
        </authorList>
    </citation>
    <scope>NUCLEOTIDE SEQUENCE [GENOMIC DNA] OF 282-285</scope>
    <source>
        <strain>168</strain>
    </source>
</reference>
<proteinExistence type="predicted"/>
<keyword id="KW-0028">Amino-acid biosynthesis</keyword>
<keyword id="KW-0057">Aromatic amino acid biosynthesis</keyword>
<keyword id="KW-0456">Lyase</keyword>
<keyword id="KW-0584">Phenylalanine biosynthesis</keyword>
<keyword id="KW-1185">Reference proteome</keyword>
<comment type="catalytic activity">
    <reaction>
        <text>prephenate + H(+) = 3-phenylpyruvate + CO2 + H2O</text>
        <dbReference type="Rhea" id="RHEA:21648"/>
        <dbReference type="ChEBI" id="CHEBI:15377"/>
        <dbReference type="ChEBI" id="CHEBI:15378"/>
        <dbReference type="ChEBI" id="CHEBI:16526"/>
        <dbReference type="ChEBI" id="CHEBI:18005"/>
        <dbReference type="ChEBI" id="CHEBI:29934"/>
        <dbReference type="EC" id="4.2.1.51"/>
    </reaction>
</comment>
<comment type="pathway">
    <text>Amino-acid biosynthesis; L-phenylalanine biosynthesis; phenylpyruvate from prephenate: step 1/1.</text>
</comment>
<organism>
    <name type="scientific">Bacillus subtilis (strain 168)</name>
    <dbReference type="NCBI Taxonomy" id="224308"/>
    <lineage>
        <taxon>Bacteria</taxon>
        <taxon>Bacillati</taxon>
        <taxon>Bacillota</taxon>
        <taxon>Bacilli</taxon>
        <taxon>Bacillales</taxon>
        <taxon>Bacillaceae</taxon>
        <taxon>Bacillus</taxon>
    </lineage>
</organism>
<feature type="chain" id="PRO_0000119176" description="Prephenate dehydratase">
    <location>
        <begin position="1"/>
        <end position="285"/>
    </location>
</feature>
<feature type="domain" description="Prephenate dehydratase" evidence="2">
    <location>
        <begin position="2"/>
        <end position="183"/>
    </location>
</feature>
<feature type="domain" description="ACT" evidence="3">
    <location>
        <begin position="204"/>
        <end position="281"/>
    </location>
</feature>
<feature type="site" description="Essential for activity" evidence="1">
    <location>
        <position position="176"/>
    </location>
</feature>